<keyword id="KW-0150">Chloroplast</keyword>
<keyword id="KW-0472">Membrane</keyword>
<keyword id="KW-0602">Photosynthesis</keyword>
<keyword id="KW-0604">Photosystem II</keyword>
<keyword id="KW-0934">Plastid</keyword>
<keyword id="KW-0674">Reaction center</keyword>
<keyword id="KW-0793">Thylakoid</keyword>
<keyword id="KW-0812">Transmembrane</keyword>
<keyword id="KW-1133">Transmembrane helix</keyword>
<name>PSBM_SACHY</name>
<geneLocation type="chloroplast"/>
<gene>
    <name evidence="1" type="primary">psbM</name>
    <name type="ordered locus">PS103</name>
</gene>
<protein>
    <recommendedName>
        <fullName evidence="1">Photosystem II reaction center protein M</fullName>
        <shortName evidence="1">PSII-M</shortName>
    </recommendedName>
</protein>
<proteinExistence type="inferred from homology"/>
<reference key="1">
    <citation type="journal article" date="2004" name="Curr. Genet.">
        <title>Structural features and transcript-editing analysis of sugarcane (Saccharum officinarum L.) chloroplast genome.</title>
        <authorList>
            <person name="Calsa T. Jr."/>
            <person name="Carraro D.M."/>
            <person name="Benatti M.R."/>
            <person name="Barbosa A.C."/>
            <person name="Kitajima J.P."/>
            <person name="Carrer H."/>
        </authorList>
    </citation>
    <scope>NUCLEOTIDE SEQUENCE [LARGE SCALE GENOMIC DNA]</scope>
    <source>
        <strain>cv. SP-80-3280</strain>
    </source>
</reference>
<evidence type="ECO:0000255" key="1">
    <source>
        <dbReference type="HAMAP-Rule" id="MF_00438"/>
    </source>
</evidence>
<comment type="function">
    <text evidence="1">One of the components of the core complex of photosystem II (PSII). PSII is a light-driven water:plastoquinone oxidoreductase that uses light energy to abstract electrons from H(2)O, generating O(2) and a proton gradient subsequently used for ATP formation. It consists of a core antenna complex that captures photons, and an electron transfer chain that converts photonic excitation into a charge separation. This subunit is found at the monomer-monomer interface.</text>
</comment>
<comment type="subunit">
    <text evidence="1">PSII is composed of 1 copy each of membrane proteins PsbA, PsbB, PsbC, PsbD, PsbE, PsbF, PsbH, PsbI, PsbJ, PsbK, PsbL, PsbM, PsbT, PsbX, PsbY, PsbZ, Psb30/Ycf12, at least 3 peripheral proteins of the oxygen-evolving complex and a large number of cofactors. It forms dimeric complexes.</text>
</comment>
<comment type="subcellular location">
    <subcellularLocation>
        <location evidence="1">Plastid</location>
        <location evidence="1">Chloroplast thylakoid membrane</location>
        <topology evidence="1">Single-pass membrane protein</topology>
    </subcellularLocation>
</comment>
<comment type="similarity">
    <text evidence="1">Belongs to the PsbM family.</text>
</comment>
<sequence length="34" mass="3755">MEVNILAFIATALFILVPTAFLLIIYVKTASQND</sequence>
<organism>
    <name type="scientific">Saccharum hybrid</name>
    <name type="common">Sugarcane</name>
    <dbReference type="NCBI Taxonomy" id="15819"/>
    <lineage>
        <taxon>Eukaryota</taxon>
        <taxon>Viridiplantae</taxon>
        <taxon>Streptophyta</taxon>
        <taxon>Embryophyta</taxon>
        <taxon>Tracheophyta</taxon>
        <taxon>Spermatophyta</taxon>
        <taxon>Magnoliopsida</taxon>
        <taxon>Liliopsida</taxon>
        <taxon>Poales</taxon>
        <taxon>Poaceae</taxon>
        <taxon>PACMAD clade</taxon>
        <taxon>Panicoideae</taxon>
        <taxon>Andropogonodae</taxon>
        <taxon>Andropogoneae</taxon>
        <taxon>Saccharinae</taxon>
        <taxon>Saccharum</taxon>
    </lineage>
</organism>
<feature type="chain" id="PRO_0000217576" description="Photosystem II reaction center protein M">
    <location>
        <begin position="1"/>
        <end position="34"/>
    </location>
</feature>
<feature type="transmembrane region" description="Helical" evidence="1">
    <location>
        <begin position="5"/>
        <end position="25"/>
    </location>
</feature>
<dbReference type="EMBL" id="AE009947">
    <property type="protein sequence ID" value="AAT44683.1"/>
    <property type="molecule type" value="Genomic_DNA"/>
</dbReference>
<dbReference type="SMR" id="Q6L3A9"/>
<dbReference type="GO" id="GO:0009535">
    <property type="term" value="C:chloroplast thylakoid membrane"/>
    <property type="evidence" value="ECO:0007669"/>
    <property type="project" value="UniProtKB-SubCell"/>
</dbReference>
<dbReference type="GO" id="GO:0009523">
    <property type="term" value="C:photosystem II"/>
    <property type="evidence" value="ECO:0007669"/>
    <property type="project" value="UniProtKB-KW"/>
</dbReference>
<dbReference type="GO" id="GO:0019684">
    <property type="term" value="P:photosynthesis, light reaction"/>
    <property type="evidence" value="ECO:0007669"/>
    <property type="project" value="InterPro"/>
</dbReference>
<dbReference type="HAMAP" id="MF_00438">
    <property type="entry name" value="PSII_PsbM"/>
    <property type="match status" value="1"/>
</dbReference>
<dbReference type="InterPro" id="IPR007826">
    <property type="entry name" value="PSII_PsbM"/>
</dbReference>
<dbReference type="InterPro" id="IPR037269">
    <property type="entry name" value="PSII_PsbM_sf"/>
</dbReference>
<dbReference type="NCBIfam" id="TIGR03038">
    <property type="entry name" value="PS_II_psbM"/>
    <property type="match status" value="1"/>
</dbReference>
<dbReference type="PANTHER" id="PTHR35774">
    <property type="entry name" value="PHOTOSYSTEM II REACTION CENTER PROTEIN M"/>
    <property type="match status" value="1"/>
</dbReference>
<dbReference type="PANTHER" id="PTHR35774:SF1">
    <property type="entry name" value="PHOTOSYSTEM II REACTION CENTER PROTEIN M"/>
    <property type="match status" value="1"/>
</dbReference>
<dbReference type="Pfam" id="PF05151">
    <property type="entry name" value="PsbM"/>
    <property type="match status" value="1"/>
</dbReference>
<dbReference type="SUPFAM" id="SSF161033">
    <property type="entry name" value="Photosystem II reaction center protein M, PsbM"/>
    <property type="match status" value="1"/>
</dbReference>
<accession>Q6L3A9</accession>